<feature type="chain" id="PRO_0000367939" description="Probable protein phosphatase 2C 8">
    <location>
        <begin position="1"/>
        <end position="351"/>
    </location>
</feature>
<feature type="domain" description="PPM-type phosphatase" evidence="2">
    <location>
        <begin position="74"/>
        <end position="348"/>
    </location>
</feature>
<feature type="region of interest" description="Disordered" evidence="3">
    <location>
        <begin position="1"/>
        <end position="63"/>
    </location>
</feature>
<feature type="compositionally biased region" description="Basic and acidic residues" evidence="3">
    <location>
        <begin position="54"/>
        <end position="63"/>
    </location>
</feature>
<feature type="binding site" evidence="1">
    <location>
        <position position="114"/>
    </location>
    <ligand>
        <name>Mn(2+)</name>
        <dbReference type="ChEBI" id="CHEBI:29035"/>
        <label>1</label>
    </ligand>
</feature>
<feature type="binding site" evidence="1">
    <location>
        <position position="114"/>
    </location>
    <ligand>
        <name>Mn(2+)</name>
        <dbReference type="ChEBI" id="CHEBI:29035"/>
        <label>2</label>
    </ligand>
</feature>
<feature type="binding site" evidence="1">
    <location>
        <position position="115"/>
    </location>
    <ligand>
        <name>Mn(2+)</name>
        <dbReference type="ChEBI" id="CHEBI:29035"/>
        <label>1</label>
    </ligand>
</feature>
<feature type="binding site" evidence="1">
    <location>
        <position position="295"/>
    </location>
    <ligand>
        <name>Mn(2+)</name>
        <dbReference type="ChEBI" id="CHEBI:29035"/>
        <label>2</label>
    </ligand>
</feature>
<feature type="binding site" evidence="1">
    <location>
        <position position="339"/>
    </location>
    <ligand>
        <name>Mn(2+)</name>
        <dbReference type="ChEBI" id="CHEBI:29035"/>
        <label>2</label>
    </ligand>
</feature>
<feature type="splice variant" id="VSP_036757" description="In isoform 2." evidence="4">
    <original>FGPSD</original>
    <variation>SVWTK</variation>
    <location>
        <begin position="301"/>
        <end position="305"/>
    </location>
</feature>
<feature type="splice variant" id="VSP_036758" description="In isoform 2." evidence="4">
    <location>
        <begin position="306"/>
        <end position="351"/>
    </location>
</feature>
<feature type="sequence conflict" description="In Ref. 3; AAL16282." evidence="4" ref="3">
    <original>A</original>
    <variation>V</variation>
    <location>
        <position position="56"/>
    </location>
</feature>
<protein>
    <recommendedName>
        <fullName>Probable protein phosphatase 2C 8</fullName>
        <shortName>AtPP2C08</shortName>
        <ecNumber>3.1.3.16</ecNumber>
    </recommendedName>
</protein>
<name>P2C08_ARATH</name>
<evidence type="ECO:0000250" key="1"/>
<evidence type="ECO:0000255" key="2">
    <source>
        <dbReference type="PROSITE-ProRule" id="PRU01082"/>
    </source>
</evidence>
<evidence type="ECO:0000256" key="3">
    <source>
        <dbReference type="SAM" id="MobiDB-lite"/>
    </source>
</evidence>
<evidence type="ECO:0000305" key="4"/>
<sequence length="351" mass="38486">MLEKESDLTAMEKPNNKHAADSFSSEDLVSPVKKAKKSEEVSGGGEAVAAVGNREAEEDKPSFVSEEKKEFLVEADVAEDKGARHTMEDVWVVLPDASLDFPGTLRCAHFAIYDGHGGRLAAEFAKKHLHLNVLSAGLPRELLDVKVAKKAILEGFRKTDELLLQKSVSGGWQDGATAVCVWILDQKVFVANIGDAKAVLARSSTTNELGNHTEAGNPLKAIVLTREHKAIYPQERSRIQKSGGVISSNGRLQGRLEVSRAFGDRHFKKFGVSATPDIHAFELTERENFMILGCDGLWEVFGPSDAVGFVQKLLKEGLHVSTVSRRLVKEAVKERRCKDNCTAIVIVFKRV</sequence>
<reference key="1">
    <citation type="journal article" date="2000" name="Nature">
        <title>Sequence and analysis of chromosome 1 of the plant Arabidopsis thaliana.</title>
        <authorList>
            <person name="Theologis A."/>
            <person name="Ecker J.R."/>
            <person name="Palm C.J."/>
            <person name="Federspiel N.A."/>
            <person name="Kaul S."/>
            <person name="White O."/>
            <person name="Alonso J."/>
            <person name="Altafi H."/>
            <person name="Araujo R."/>
            <person name="Bowman C.L."/>
            <person name="Brooks S.Y."/>
            <person name="Buehler E."/>
            <person name="Chan A."/>
            <person name="Chao Q."/>
            <person name="Chen H."/>
            <person name="Cheuk R.F."/>
            <person name="Chin C.W."/>
            <person name="Chung M.K."/>
            <person name="Conn L."/>
            <person name="Conway A.B."/>
            <person name="Conway A.R."/>
            <person name="Creasy T.H."/>
            <person name="Dewar K."/>
            <person name="Dunn P."/>
            <person name="Etgu P."/>
            <person name="Feldblyum T.V."/>
            <person name="Feng J.-D."/>
            <person name="Fong B."/>
            <person name="Fujii C.Y."/>
            <person name="Gill J.E."/>
            <person name="Goldsmith A.D."/>
            <person name="Haas B."/>
            <person name="Hansen N.F."/>
            <person name="Hughes B."/>
            <person name="Huizar L."/>
            <person name="Hunter J.L."/>
            <person name="Jenkins J."/>
            <person name="Johnson-Hopson C."/>
            <person name="Khan S."/>
            <person name="Khaykin E."/>
            <person name="Kim C.J."/>
            <person name="Koo H.L."/>
            <person name="Kremenetskaia I."/>
            <person name="Kurtz D.B."/>
            <person name="Kwan A."/>
            <person name="Lam B."/>
            <person name="Langin-Hooper S."/>
            <person name="Lee A."/>
            <person name="Lee J.M."/>
            <person name="Lenz C.A."/>
            <person name="Li J.H."/>
            <person name="Li Y.-P."/>
            <person name="Lin X."/>
            <person name="Liu S.X."/>
            <person name="Liu Z.A."/>
            <person name="Luros J.S."/>
            <person name="Maiti R."/>
            <person name="Marziali A."/>
            <person name="Militscher J."/>
            <person name="Miranda M."/>
            <person name="Nguyen M."/>
            <person name="Nierman W.C."/>
            <person name="Osborne B.I."/>
            <person name="Pai G."/>
            <person name="Peterson J."/>
            <person name="Pham P.K."/>
            <person name="Rizzo M."/>
            <person name="Rooney T."/>
            <person name="Rowley D."/>
            <person name="Sakano H."/>
            <person name="Salzberg S.L."/>
            <person name="Schwartz J.R."/>
            <person name="Shinn P."/>
            <person name="Southwick A.M."/>
            <person name="Sun H."/>
            <person name="Tallon L.J."/>
            <person name="Tambunga G."/>
            <person name="Toriumi M.J."/>
            <person name="Town C.D."/>
            <person name="Utterback T."/>
            <person name="Van Aken S."/>
            <person name="Vaysberg M."/>
            <person name="Vysotskaia V.S."/>
            <person name="Walker M."/>
            <person name="Wu D."/>
            <person name="Yu G."/>
            <person name="Fraser C.M."/>
            <person name="Venter J.C."/>
            <person name="Davis R.W."/>
        </authorList>
    </citation>
    <scope>NUCLEOTIDE SEQUENCE [LARGE SCALE GENOMIC DNA]</scope>
    <source>
        <strain>cv. Columbia</strain>
    </source>
</reference>
<reference key="2">
    <citation type="journal article" date="2017" name="Plant J.">
        <title>Araport11: a complete reannotation of the Arabidopsis thaliana reference genome.</title>
        <authorList>
            <person name="Cheng C.Y."/>
            <person name="Krishnakumar V."/>
            <person name="Chan A.P."/>
            <person name="Thibaud-Nissen F."/>
            <person name="Schobel S."/>
            <person name="Town C.D."/>
        </authorList>
    </citation>
    <scope>GENOME REANNOTATION</scope>
    <source>
        <strain>cv. Columbia</strain>
    </source>
</reference>
<reference key="3">
    <citation type="journal article" date="2003" name="Science">
        <title>Empirical analysis of transcriptional activity in the Arabidopsis genome.</title>
        <authorList>
            <person name="Yamada K."/>
            <person name="Lim J."/>
            <person name="Dale J.M."/>
            <person name="Chen H."/>
            <person name="Shinn P."/>
            <person name="Palm C.J."/>
            <person name="Southwick A.M."/>
            <person name="Wu H.C."/>
            <person name="Kim C.J."/>
            <person name="Nguyen M."/>
            <person name="Pham P.K."/>
            <person name="Cheuk R.F."/>
            <person name="Karlin-Newmann G."/>
            <person name="Liu S.X."/>
            <person name="Lam B."/>
            <person name="Sakano H."/>
            <person name="Wu T."/>
            <person name="Yu G."/>
            <person name="Miranda M."/>
            <person name="Quach H.L."/>
            <person name="Tripp M."/>
            <person name="Chang C.H."/>
            <person name="Lee J.M."/>
            <person name="Toriumi M.J."/>
            <person name="Chan M.M."/>
            <person name="Tang C.C."/>
            <person name="Onodera C.S."/>
            <person name="Deng J.M."/>
            <person name="Akiyama K."/>
            <person name="Ansari Y."/>
            <person name="Arakawa T."/>
            <person name="Banh J."/>
            <person name="Banno F."/>
            <person name="Bowser L."/>
            <person name="Brooks S.Y."/>
            <person name="Carninci P."/>
            <person name="Chao Q."/>
            <person name="Choy N."/>
            <person name="Enju A."/>
            <person name="Goldsmith A.D."/>
            <person name="Gurjal M."/>
            <person name="Hansen N.F."/>
            <person name="Hayashizaki Y."/>
            <person name="Johnson-Hopson C."/>
            <person name="Hsuan V.W."/>
            <person name="Iida K."/>
            <person name="Karnes M."/>
            <person name="Khan S."/>
            <person name="Koesema E."/>
            <person name="Ishida J."/>
            <person name="Jiang P.X."/>
            <person name="Jones T."/>
            <person name="Kawai J."/>
            <person name="Kamiya A."/>
            <person name="Meyers C."/>
            <person name="Nakajima M."/>
            <person name="Narusaka M."/>
            <person name="Seki M."/>
            <person name="Sakurai T."/>
            <person name="Satou M."/>
            <person name="Tamse R."/>
            <person name="Vaysberg M."/>
            <person name="Wallender E.K."/>
            <person name="Wong C."/>
            <person name="Yamamura Y."/>
            <person name="Yuan S."/>
            <person name="Shinozaki K."/>
            <person name="Davis R.W."/>
            <person name="Theologis A."/>
            <person name="Ecker J.R."/>
        </authorList>
    </citation>
    <scope>NUCLEOTIDE SEQUENCE [LARGE SCALE MRNA] (ISOFORM 1)</scope>
    <source>
        <strain>cv. Columbia</strain>
    </source>
</reference>
<reference key="4">
    <citation type="submission" date="2006-07" db="EMBL/GenBank/DDBJ databases">
        <title>Arabidopsis ORF clone.</title>
        <authorList>
            <person name="Quinitio C."/>
            <person name="Chen H."/>
            <person name="Kim C.J."/>
            <person name="Shinn P."/>
            <person name="Ecker J.R."/>
        </authorList>
    </citation>
    <scope>NUCLEOTIDE SEQUENCE [LARGE SCALE MRNA] (ISOFORM 1)</scope>
    <source>
        <strain>cv. Columbia</strain>
    </source>
</reference>
<reference key="5">
    <citation type="journal article" date="2008" name="BMC Genomics">
        <title>Genome-wide and expression analysis of protein phosphatase 2C in rice and Arabidopsis.</title>
        <authorList>
            <person name="Xue T."/>
            <person name="Wang D."/>
            <person name="Zhang S."/>
            <person name="Ehlting J."/>
            <person name="Ni F."/>
            <person name="Jacab S."/>
            <person name="Zheng C."/>
            <person name="Zhong Y."/>
        </authorList>
    </citation>
    <scope>GENE FAMILY</scope>
    <scope>NOMENCLATURE</scope>
</reference>
<keyword id="KW-0025">Alternative splicing</keyword>
<keyword id="KW-0378">Hydrolase</keyword>
<keyword id="KW-0460">Magnesium</keyword>
<keyword id="KW-0464">Manganese</keyword>
<keyword id="KW-0479">Metal-binding</keyword>
<keyword id="KW-0904">Protein phosphatase</keyword>
<keyword id="KW-1185">Reference proteome</keyword>
<proteinExistence type="evidence at transcript level"/>
<organism>
    <name type="scientific">Arabidopsis thaliana</name>
    <name type="common">Mouse-ear cress</name>
    <dbReference type="NCBI Taxonomy" id="3702"/>
    <lineage>
        <taxon>Eukaryota</taxon>
        <taxon>Viridiplantae</taxon>
        <taxon>Streptophyta</taxon>
        <taxon>Embryophyta</taxon>
        <taxon>Tracheophyta</taxon>
        <taxon>Spermatophyta</taxon>
        <taxon>Magnoliopsida</taxon>
        <taxon>eudicotyledons</taxon>
        <taxon>Gunneridae</taxon>
        <taxon>Pentapetalae</taxon>
        <taxon>rosids</taxon>
        <taxon>malvids</taxon>
        <taxon>Brassicales</taxon>
        <taxon>Brassicaceae</taxon>
        <taxon>Camelineae</taxon>
        <taxon>Arabidopsis</taxon>
    </lineage>
</organism>
<dbReference type="EC" id="3.1.3.16"/>
<dbReference type="EMBL" id="AC034107">
    <property type="protein sequence ID" value="AAF97840.1"/>
    <property type="status" value="ALT_INIT"/>
    <property type="molecule type" value="Genomic_DNA"/>
</dbReference>
<dbReference type="EMBL" id="CP002684">
    <property type="protein sequence ID" value="AEE29665.1"/>
    <property type="molecule type" value="Genomic_DNA"/>
</dbReference>
<dbReference type="EMBL" id="CP002684">
    <property type="protein sequence ID" value="AEE29666.1"/>
    <property type="molecule type" value="Genomic_DNA"/>
</dbReference>
<dbReference type="EMBL" id="AF428352">
    <property type="protein sequence ID" value="AAL16282.1"/>
    <property type="molecule type" value="mRNA"/>
</dbReference>
<dbReference type="EMBL" id="BT026023">
    <property type="protein sequence ID" value="ABG48379.1"/>
    <property type="molecule type" value="mRNA"/>
</dbReference>
<dbReference type="PIR" id="G86315">
    <property type="entry name" value="G86315"/>
</dbReference>
<dbReference type="RefSeq" id="NP_001077557.1">
    <molecule id="Q9LMT1-2"/>
    <property type="nucleotide sequence ID" value="NM_001084088.2"/>
</dbReference>
<dbReference type="RefSeq" id="NP_564045.1">
    <molecule id="Q9LMT1-1"/>
    <property type="nucleotide sequence ID" value="NM_101665.3"/>
</dbReference>
<dbReference type="SMR" id="Q9LMT1"/>
<dbReference type="BioGRID" id="23622">
    <property type="interactions" value="1"/>
</dbReference>
<dbReference type="FunCoup" id="Q9LMT1">
    <property type="interactions" value="2934"/>
</dbReference>
<dbReference type="IntAct" id="Q9LMT1">
    <property type="interactions" value="1"/>
</dbReference>
<dbReference type="MINT" id="Q9LMT1"/>
<dbReference type="STRING" id="3702.Q9LMT1"/>
<dbReference type="PaxDb" id="3702-AT1G18030.1"/>
<dbReference type="ProteomicsDB" id="248696">
    <molecule id="Q9LMT1-1"/>
</dbReference>
<dbReference type="EnsemblPlants" id="AT1G18030.1">
    <molecule id="Q9LMT1-1"/>
    <property type="protein sequence ID" value="AT1G18030.1"/>
    <property type="gene ID" value="AT1G18030"/>
</dbReference>
<dbReference type="EnsemblPlants" id="AT1G18030.2">
    <molecule id="Q9LMT1-2"/>
    <property type="protein sequence ID" value="AT1G18030.2"/>
    <property type="gene ID" value="AT1G18030"/>
</dbReference>
<dbReference type="GeneID" id="838383"/>
<dbReference type="Gramene" id="AT1G18030.1">
    <molecule id="Q9LMT1-1"/>
    <property type="protein sequence ID" value="AT1G18030.1"/>
    <property type="gene ID" value="AT1G18030"/>
</dbReference>
<dbReference type="Gramene" id="AT1G18030.2">
    <molecule id="Q9LMT1-2"/>
    <property type="protein sequence ID" value="AT1G18030.2"/>
    <property type="gene ID" value="AT1G18030"/>
</dbReference>
<dbReference type="KEGG" id="ath:AT1G18030"/>
<dbReference type="Araport" id="AT1G18030"/>
<dbReference type="TAIR" id="AT1G18030"/>
<dbReference type="eggNOG" id="KOG0698">
    <property type="taxonomic scope" value="Eukaryota"/>
</dbReference>
<dbReference type="HOGENOM" id="CLU_013173_1_2_1"/>
<dbReference type="InParanoid" id="Q9LMT1"/>
<dbReference type="OMA" id="NFSCFCL"/>
<dbReference type="OrthoDB" id="10264738at2759"/>
<dbReference type="PhylomeDB" id="Q9LMT1"/>
<dbReference type="PRO" id="PR:Q9LMT1"/>
<dbReference type="Proteomes" id="UP000006548">
    <property type="component" value="Chromosome 1"/>
</dbReference>
<dbReference type="ExpressionAtlas" id="Q9LMT1">
    <property type="expression patterns" value="baseline and differential"/>
</dbReference>
<dbReference type="GO" id="GO:0046872">
    <property type="term" value="F:metal ion binding"/>
    <property type="evidence" value="ECO:0007669"/>
    <property type="project" value="UniProtKB-KW"/>
</dbReference>
<dbReference type="GO" id="GO:0004722">
    <property type="term" value="F:protein serine/threonine phosphatase activity"/>
    <property type="evidence" value="ECO:0007669"/>
    <property type="project" value="UniProtKB-EC"/>
</dbReference>
<dbReference type="CDD" id="cd00143">
    <property type="entry name" value="PP2Cc"/>
    <property type="match status" value="1"/>
</dbReference>
<dbReference type="FunFam" id="3.60.40.10:FF:000061">
    <property type="entry name" value="Probable protein phosphatase 2C 67"/>
    <property type="match status" value="1"/>
</dbReference>
<dbReference type="Gene3D" id="3.60.40.10">
    <property type="entry name" value="PPM-type phosphatase domain"/>
    <property type="match status" value="1"/>
</dbReference>
<dbReference type="InterPro" id="IPR015655">
    <property type="entry name" value="PP2C"/>
</dbReference>
<dbReference type="InterPro" id="IPR036457">
    <property type="entry name" value="PPM-type-like_dom_sf"/>
</dbReference>
<dbReference type="InterPro" id="IPR001932">
    <property type="entry name" value="PPM-type_phosphatase-like_dom"/>
</dbReference>
<dbReference type="PANTHER" id="PTHR13832:SF699">
    <property type="entry name" value="INTEGRIN-LINKED KINASE-ASSOCIATED SERINE_THREONINE PHOSPHATASE 2C"/>
    <property type="match status" value="1"/>
</dbReference>
<dbReference type="PANTHER" id="PTHR13832">
    <property type="entry name" value="PROTEIN PHOSPHATASE 2C"/>
    <property type="match status" value="1"/>
</dbReference>
<dbReference type="Pfam" id="PF00481">
    <property type="entry name" value="PP2C"/>
    <property type="match status" value="1"/>
</dbReference>
<dbReference type="SMART" id="SM00332">
    <property type="entry name" value="PP2Cc"/>
    <property type="match status" value="1"/>
</dbReference>
<dbReference type="SUPFAM" id="SSF81606">
    <property type="entry name" value="PP2C-like"/>
    <property type="match status" value="1"/>
</dbReference>
<dbReference type="PROSITE" id="PS51746">
    <property type="entry name" value="PPM_2"/>
    <property type="match status" value="1"/>
</dbReference>
<gene>
    <name type="ordered locus">At1g18030</name>
    <name type="ORF">T10F20.4</name>
</gene>
<accession>Q9LMT1</accession>
<accession>A8MRQ0</accession>
<accession>Q147S0</accession>
<accession>Q944K0</accession>
<comment type="catalytic activity">
    <reaction>
        <text>O-phospho-L-seryl-[protein] + H2O = L-seryl-[protein] + phosphate</text>
        <dbReference type="Rhea" id="RHEA:20629"/>
        <dbReference type="Rhea" id="RHEA-COMP:9863"/>
        <dbReference type="Rhea" id="RHEA-COMP:11604"/>
        <dbReference type="ChEBI" id="CHEBI:15377"/>
        <dbReference type="ChEBI" id="CHEBI:29999"/>
        <dbReference type="ChEBI" id="CHEBI:43474"/>
        <dbReference type="ChEBI" id="CHEBI:83421"/>
        <dbReference type="EC" id="3.1.3.16"/>
    </reaction>
</comment>
<comment type="catalytic activity">
    <reaction>
        <text>O-phospho-L-threonyl-[protein] + H2O = L-threonyl-[protein] + phosphate</text>
        <dbReference type="Rhea" id="RHEA:47004"/>
        <dbReference type="Rhea" id="RHEA-COMP:11060"/>
        <dbReference type="Rhea" id="RHEA-COMP:11605"/>
        <dbReference type="ChEBI" id="CHEBI:15377"/>
        <dbReference type="ChEBI" id="CHEBI:30013"/>
        <dbReference type="ChEBI" id="CHEBI:43474"/>
        <dbReference type="ChEBI" id="CHEBI:61977"/>
        <dbReference type="EC" id="3.1.3.16"/>
    </reaction>
</comment>
<comment type="cofactor">
    <cofactor evidence="1">
        <name>Mg(2+)</name>
        <dbReference type="ChEBI" id="CHEBI:18420"/>
    </cofactor>
    <cofactor evidence="1">
        <name>Mn(2+)</name>
        <dbReference type="ChEBI" id="CHEBI:29035"/>
    </cofactor>
    <text evidence="1">Binds 2 magnesium or manganese ions per subunit.</text>
</comment>
<comment type="alternative products">
    <event type="alternative splicing"/>
    <isoform>
        <id>Q9LMT1-1</id>
        <name>1</name>
        <sequence type="displayed"/>
    </isoform>
    <isoform>
        <id>Q9LMT1-2</id>
        <name>2</name>
        <sequence type="described" ref="VSP_036757 VSP_036758"/>
    </isoform>
</comment>
<comment type="miscellaneous">
    <molecule>Isoform 2</molecule>
    <text evidence="4">May be due to a competing donor splice site.</text>
</comment>
<comment type="similarity">
    <text evidence="4">Belongs to the PP2C family.</text>
</comment>
<comment type="sequence caution" evidence="4">
    <conflict type="erroneous initiation">
        <sequence resource="EMBL-CDS" id="AAF97840"/>
    </conflict>
</comment>